<protein>
    <recommendedName>
        <fullName evidence="1">Isocitrate lyase</fullName>
        <shortName evidence="4">ICL</shortName>
        <shortName evidence="4">Isocitrase</shortName>
        <shortName evidence="4">Isocitratase</shortName>
        <ecNumber evidence="1">4.1.3.1</ecNumber>
    </recommendedName>
    <alternativeName>
        <fullName evidence="1">Methylisocitrate lyase</fullName>
        <shortName evidence="4">MICA</shortName>
        <ecNumber evidence="1">4.1.3.30</ecNumber>
    </alternativeName>
    <alternativeName>
        <fullName evidence="4">Threo-D(S)-isocitrate glyoxylate-lyase</fullName>
    </alternativeName>
</protein>
<sequence length="540" mass="60493">MASTNFDLEDQKYLEDVNAVKQWWTDSRWRYTKRPFTAEQIVAKRGTLKIEYPSNTQAKKLWKILEERFNDKTVSYTYGCLEPTMLTQMIKYLDTIYVSGWQSSSTASSTDEPSPDLADYPMNTVPNKVNQLFMAQLFHDRKQREERITTPREKRSSVQNYDYLRPIIADADTGHGGLTAVMKLTKLFVERGAAGIHIEDQAPGTKKCGHMAGKVLVPISEHINRLVAIRAQADIMGTDLLAIARTDSEAATLITSTIDYRDHAYLLGSTNPSLQPLNDLMVAAEQSGKSGEQLQAIEDSWIAQAGIKKFDDAVIDTINQGSFANKKELINRYLTAAKGKSNSEARAIAKGITGMDIYWNWDAPRTRGGFYRYQGGTQCAVNRAVAYAPFADLIWMESKLPDYKQAKEFADGVHAVWPEQKLAYNLSPSFNWKAAMSKEEQLTYIKRLGKLGYCWQFITLAGLHSTALISDQFASAYAKQGMRAYGELIQEPEMERKVDIVTHQKWSGANLIDHSLAMVTGGISSTAAMGKGVTEDQFKS</sequence>
<name>ACEA_TALMA</name>
<feature type="chain" id="PRO_0000068795" description="Isocitrate lyase">
    <location>
        <begin position="1"/>
        <end position="540"/>
    </location>
</feature>
<feature type="active site" description="Proton acceptor" evidence="3">
    <location>
        <position position="208"/>
    </location>
</feature>
<feature type="binding site" evidence="3">
    <location>
        <begin position="99"/>
        <end position="101"/>
    </location>
    <ligand>
        <name>substrate</name>
    </ligand>
</feature>
<feature type="binding site" evidence="3">
    <location>
        <position position="170"/>
    </location>
    <ligand>
        <name>Mg(2+)</name>
        <dbReference type="ChEBI" id="CHEBI:18420"/>
    </ligand>
</feature>
<feature type="binding site" evidence="3">
    <location>
        <begin position="209"/>
        <end position="210"/>
    </location>
    <ligand>
        <name>substrate</name>
    </ligand>
</feature>
<feature type="binding site" evidence="3">
    <location>
        <position position="245"/>
    </location>
    <ligand>
        <name>substrate</name>
    </ligand>
</feature>
<feature type="binding site" evidence="3">
    <location>
        <begin position="425"/>
        <end position="429"/>
    </location>
    <ligand>
        <name>substrate</name>
    </ligand>
</feature>
<feature type="binding site" evidence="3">
    <location>
        <position position="459"/>
    </location>
    <ligand>
        <name>substrate</name>
    </ligand>
</feature>
<comment type="function">
    <text evidence="1">Catalyzes the formation of succinate and glyoxylate from isocitrate, a key step of the glyoxylate cycle, which operates as an anaplerotic route for replenishing the tricarboxylic acid cycle. Required for growth on ethanol or acetate, but dispensable when fermentable carbon sources are available. Also acts on 2-methylisocitrate.</text>
</comment>
<comment type="catalytic activity">
    <reaction evidence="1">
        <text>D-threo-isocitrate = glyoxylate + succinate</text>
        <dbReference type="Rhea" id="RHEA:13245"/>
        <dbReference type="ChEBI" id="CHEBI:15562"/>
        <dbReference type="ChEBI" id="CHEBI:30031"/>
        <dbReference type="ChEBI" id="CHEBI:36655"/>
        <dbReference type="EC" id="4.1.3.1"/>
    </reaction>
</comment>
<comment type="catalytic activity">
    <reaction evidence="1">
        <text>(2S,3R)-3-hydroxybutane-1,2,3-tricarboxylate = pyruvate + succinate</text>
        <dbReference type="Rhea" id="RHEA:16809"/>
        <dbReference type="ChEBI" id="CHEBI:15361"/>
        <dbReference type="ChEBI" id="CHEBI:30031"/>
        <dbReference type="ChEBI" id="CHEBI:57429"/>
        <dbReference type="EC" id="4.1.3.30"/>
    </reaction>
</comment>
<comment type="cofactor">
    <cofactor evidence="3">
        <name>Mg(2+)</name>
        <dbReference type="ChEBI" id="CHEBI:18420"/>
    </cofactor>
</comment>
<comment type="pathway">
    <text>Carbohydrate metabolism; glyoxylate cycle; (S)-malate from isocitrate: step 1/2.</text>
</comment>
<comment type="subunit">
    <text evidence="1">Homotetramer.</text>
</comment>
<comment type="subcellular location">
    <subcellularLocation>
        <location evidence="2">Glyoxysome</location>
    </subcellularLocation>
</comment>
<comment type="similarity">
    <text evidence="4">Belongs to the isocitrate lyase/PEP mutase superfamily. Isocitrate lyase family.</text>
</comment>
<gene>
    <name evidence="1" type="primary">icl1</name>
</gene>
<evidence type="ECO:0000250" key="1">
    <source>
        <dbReference type="UniProtKB" id="P28240"/>
    </source>
</evidence>
<evidence type="ECO:0000250" key="2">
    <source>
        <dbReference type="UniProtKB" id="P28299"/>
    </source>
</evidence>
<evidence type="ECO:0000250" key="3">
    <source>
        <dbReference type="UniProtKB" id="P9WKK7"/>
    </source>
</evidence>
<evidence type="ECO:0000305" key="4"/>
<proteinExistence type="inferred from homology"/>
<organism>
    <name type="scientific">Talaromyces marneffei</name>
    <name type="common">Penicillium marneffei</name>
    <dbReference type="NCBI Taxonomy" id="37727"/>
    <lineage>
        <taxon>Eukaryota</taxon>
        <taxon>Fungi</taxon>
        <taxon>Dikarya</taxon>
        <taxon>Ascomycota</taxon>
        <taxon>Pezizomycotina</taxon>
        <taxon>Eurotiomycetes</taxon>
        <taxon>Eurotiomycetidae</taxon>
        <taxon>Eurotiales</taxon>
        <taxon>Trichocomaceae</taxon>
        <taxon>Talaromyces</taxon>
        <taxon>Talaromyces sect. Talaromyces</taxon>
    </lineage>
</organism>
<keyword id="KW-0329">Glyoxylate bypass</keyword>
<keyword id="KW-0330">Glyoxysome</keyword>
<keyword id="KW-0456">Lyase</keyword>
<keyword id="KW-0460">Magnesium</keyword>
<keyword id="KW-0479">Metal-binding</keyword>
<keyword id="KW-0576">Peroxisome</keyword>
<keyword id="KW-0816">Tricarboxylic acid cycle</keyword>
<dbReference type="EC" id="4.1.3.1" evidence="1"/>
<dbReference type="EC" id="4.1.3.30" evidence="1"/>
<dbReference type="EMBL" id="AF373018">
    <property type="protein sequence ID" value="AAK54240.1"/>
    <property type="molecule type" value="Genomic_DNA"/>
</dbReference>
<dbReference type="SMR" id="Q96WZ5"/>
<dbReference type="VEuPathDB" id="FungiDB:PMAA_080470"/>
<dbReference type="UniPathway" id="UPA00703">
    <property type="reaction ID" value="UER00719"/>
</dbReference>
<dbReference type="GO" id="GO:0009514">
    <property type="term" value="C:glyoxysome"/>
    <property type="evidence" value="ECO:0007669"/>
    <property type="project" value="UniProtKB-SubCell"/>
</dbReference>
<dbReference type="GO" id="GO:0004451">
    <property type="term" value="F:isocitrate lyase activity"/>
    <property type="evidence" value="ECO:0007669"/>
    <property type="project" value="UniProtKB-EC"/>
</dbReference>
<dbReference type="GO" id="GO:0046872">
    <property type="term" value="F:metal ion binding"/>
    <property type="evidence" value="ECO:0007669"/>
    <property type="project" value="UniProtKB-KW"/>
</dbReference>
<dbReference type="GO" id="GO:0046421">
    <property type="term" value="F:methylisocitrate lyase activity"/>
    <property type="evidence" value="ECO:0007669"/>
    <property type="project" value="UniProtKB-EC"/>
</dbReference>
<dbReference type="GO" id="GO:0006097">
    <property type="term" value="P:glyoxylate cycle"/>
    <property type="evidence" value="ECO:0007669"/>
    <property type="project" value="UniProtKB-UniPathway"/>
</dbReference>
<dbReference type="GO" id="GO:0006099">
    <property type="term" value="P:tricarboxylic acid cycle"/>
    <property type="evidence" value="ECO:0007669"/>
    <property type="project" value="UniProtKB-KW"/>
</dbReference>
<dbReference type="FunFam" id="1.10.10.850:FF:000001">
    <property type="entry name" value="Isocitrate lyase"/>
    <property type="match status" value="1"/>
</dbReference>
<dbReference type="Gene3D" id="1.10.10.850">
    <property type="match status" value="1"/>
</dbReference>
<dbReference type="Gene3D" id="3.20.20.60">
    <property type="entry name" value="Phosphoenolpyruvate-binding domains"/>
    <property type="match status" value="1"/>
</dbReference>
<dbReference type="InterPro" id="IPR006254">
    <property type="entry name" value="Isocitrate_lyase"/>
</dbReference>
<dbReference type="InterPro" id="IPR018523">
    <property type="entry name" value="Isocitrate_lyase_ph_CS"/>
</dbReference>
<dbReference type="InterPro" id="IPR015813">
    <property type="entry name" value="Pyrv/PenolPyrv_kinase-like_dom"/>
</dbReference>
<dbReference type="InterPro" id="IPR040442">
    <property type="entry name" value="Pyrv_kinase-like_dom_sf"/>
</dbReference>
<dbReference type="NCBIfam" id="TIGR01346">
    <property type="entry name" value="isocit_lyase"/>
    <property type="match status" value="1"/>
</dbReference>
<dbReference type="PANTHER" id="PTHR21631:SF3">
    <property type="entry name" value="BIFUNCTIONAL GLYOXYLATE CYCLE PROTEIN"/>
    <property type="match status" value="1"/>
</dbReference>
<dbReference type="PANTHER" id="PTHR21631">
    <property type="entry name" value="ISOCITRATE LYASE/MALATE SYNTHASE"/>
    <property type="match status" value="1"/>
</dbReference>
<dbReference type="Pfam" id="PF00463">
    <property type="entry name" value="ICL"/>
    <property type="match status" value="1"/>
</dbReference>
<dbReference type="PIRSF" id="PIRSF001362">
    <property type="entry name" value="Isocit_lyase"/>
    <property type="match status" value="1"/>
</dbReference>
<dbReference type="SUPFAM" id="SSF51621">
    <property type="entry name" value="Phosphoenolpyruvate/pyruvate domain"/>
    <property type="match status" value="1"/>
</dbReference>
<dbReference type="PROSITE" id="PS00161">
    <property type="entry name" value="ISOCITRATE_LYASE"/>
    <property type="match status" value="1"/>
</dbReference>
<accession>Q96WZ5</accession>
<reference key="1">
    <citation type="submission" date="2001-04" db="EMBL/GenBank/DDBJ databases">
        <title>Nucleotide sequence of the isocitrate lyase gene from the pathogenic fungus, Penicillium marneffei.</title>
        <authorList>
            <person name="Haycocks N.G."/>
            <person name="McGinnis M.R."/>
            <person name="Cooper C.R. Jr."/>
        </authorList>
    </citation>
    <scope>NUCLEOTIDE SEQUENCE [GENOMIC DNA]</scope>
    <source>
        <strain>PM30</strain>
    </source>
</reference>